<dbReference type="EC" id="6.3.4.4" evidence="2"/>
<dbReference type="EMBL" id="DS547125">
    <property type="protein sequence ID" value="EDR03268.1"/>
    <property type="molecule type" value="Genomic_DNA"/>
</dbReference>
<dbReference type="RefSeq" id="XP_001886064.1">
    <property type="nucleotide sequence ID" value="XM_001886029.1"/>
</dbReference>
<dbReference type="SMR" id="B0DQB9"/>
<dbReference type="FunCoup" id="B0DQB9">
    <property type="interactions" value="559"/>
</dbReference>
<dbReference type="STRING" id="486041.B0DQB9"/>
<dbReference type="GeneID" id="6081698"/>
<dbReference type="KEGG" id="lbc:LACBIDRAFT_295311"/>
<dbReference type="HOGENOM" id="CLU_029848_3_0_1"/>
<dbReference type="InParanoid" id="B0DQB9"/>
<dbReference type="OrthoDB" id="10265645at2759"/>
<dbReference type="UniPathway" id="UPA00075">
    <property type="reaction ID" value="UER00335"/>
</dbReference>
<dbReference type="Proteomes" id="UP000001194">
    <property type="component" value="Unassembled WGS sequence"/>
</dbReference>
<dbReference type="GO" id="GO:0005737">
    <property type="term" value="C:cytoplasm"/>
    <property type="evidence" value="ECO:0007669"/>
    <property type="project" value="UniProtKB-SubCell"/>
</dbReference>
<dbReference type="GO" id="GO:0004019">
    <property type="term" value="F:adenylosuccinate synthase activity"/>
    <property type="evidence" value="ECO:0007669"/>
    <property type="project" value="UniProtKB-UniRule"/>
</dbReference>
<dbReference type="GO" id="GO:0005525">
    <property type="term" value="F:GTP binding"/>
    <property type="evidence" value="ECO:0007669"/>
    <property type="project" value="UniProtKB-UniRule"/>
</dbReference>
<dbReference type="GO" id="GO:0000287">
    <property type="term" value="F:magnesium ion binding"/>
    <property type="evidence" value="ECO:0007669"/>
    <property type="project" value="UniProtKB-UniRule"/>
</dbReference>
<dbReference type="GO" id="GO:0044208">
    <property type="term" value="P:'de novo' AMP biosynthetic process"/>
    <property type="evidence" value="ECO:0007669"/>
    <property type="project" value="UniProtKB-UniRule"/>
</dbReference>
<dbReference type="GO" id="GO:0046040">
    <property type="term" value="P:IMP metabolic process"/>
    <property type="evidence" value="ECO:0007669"/>
    <property type="project" value="TreeGrafter"/>
</dbReference>
<dbReference type="CDD" id="cd03108">
    <property type="entry name" value="AdSS"/>
    <property type="match status" value="1"/>
</dbReference>
<dbReference type="FunFam" id="3.90.170.10:FF:000001">
    <property type="entry name" value="Adenylosuccinate synthetase"/>
    <property type="match status" value="1"/>
</dbReference>
<dbReference type="FunFam" id="1.10.300.10:FF:000002">
    <property type="entry name" value="Adenylosuccinate synthetase, chloroplastic"/>
    <property type="match status" value="1"/>
</dbReference>
<dbReference type="Gene3D" id="3.40.440.10">
    <property type="entry name" value="Adenylosuccinate Synthetase, subunit A, domain 1"/>
    <property type="match status" value="1"/>
</dbReference>
<dbReference type="Gene3D" id="1.10.300.10">
    <property type="entry name" value="Adenylosuccinate Synthetase, subunit A, domain 2"/>
    <property type="match status" value="1"/>
</dbReference>
<dbReference type="Gene3D" id="3.90.170.10">
    <property type="entry name" value="Adenylosuccinate Synthetase, subunit A, domain 3"/>
    <property type="match status" value="1"/>
</dbReference>
<dbReference type="HAMAP" id="MF_00011">
    <property type="entry name" value="Adenylosucc_synth"/>
    <property type="match status" value="1"/>
</dbReference>
<dbReference type="InterPro" id="IPR018220">
    <property type="entry name" value="Adenylosuccin_syn_GTP-bd"/>
</dbReference>
<dbReference type="InterPro" id="IPR033128">
    <property type="entry name" value="Adenylosuccin_syn_Lys_AS"/>
</dbReference>
<dbReference type="InterPro" id="IPR042109">
    <property type="entry name" value="Adenylosuccinate_synth_dom1"/>
</dbReference>
<dbReference type="InterPro" id="IPR042110">
    <property type="entry name" value="Adenylosuccinate_synth_dom2"/>
</dbReference>
<dbReference type="InterPro" id="IPR042111">
    <property type="entry name" value="Adenylosuccinate_synth_dom3"/>
</dbReference>
<dbReference type="InterPro" id="IPR001114">
    <property type="entry name" value="Adenylosuccinate_synthetase"/>
</dbReference>
<dbReference type="InterPro" id="IPR027417">
    <property type="entry name" value="P-loop_NTPase"/>
</dbReference>
<dbReference type="NCBIfam" id="NF002223">
    <property type="entry name" value="PRK01117.1"/>
    <property type="match status" value="1"/>
</dbReference>
<dbReference type="NCBIfam" id="TIGR00184">
    <property type="entry name" value="purA"/>
    <property type="match status" value="1"/>
</dbReference>
<dbReference type="PANTHER" id="PTHR11846">
    <property type="entry name" value="ADENYLOSUCCINATE SYNTHETASE"/>
    <property type="match status" value="1"/>
</dbReference>
<dbReference type="PANTHER" id="PTHR11846:SF0">
    <property type="entry name" value="ADENYLOSUCCINATE SYNTHETASE"/>
    <property type="match status" value="1"/>
</dbReference>
<dbReference type="Pfam" id="PF00709">
    <property type="entry name" value="Adenylsucc_synt"/>
    <property type="match status" value="1"/>
</dbReference>
<dbReference type="SMART" id="SM00788">
    <property type="entry name" value="Adenylsucc_synt"/>
    <property type="match status" value="1"/>
</dbReference>
<dbReference type="SUPFAM" id="SSF52540">
    <property type="entry name" value="P-loop containing nucleoside triphosphate hydrolases"/>
    <property type="match status" value="1"/>
</dbReference>
<dbReference type="PROSITE" id="PS01266">
    <property type="entry name" value="ADENYLOSUCCIN_SYN_1"/>
    <property type="match status" value="1"/>
</dbReference>
<dbReference type="PROSITE" id="PS00513">
    <property type="entry name" value="ADENYLOSUCCIN_SYN_2"/>
    <property type="match status" value="1"/>
</dbReference>
<comment type="function">
    <text evidence="1">Plays an important role in the de novo pathway and in the salvage pathway of purine nucleotide biosynthesis. Catalyzes the first committed step in the biosynthesis of AMP from IMP (By similarity).</text>
</comment>
<comment type="catalytic activity">
    <reaction evidence="2">
        <text>IMP + L-aspartate + GTP = N(6)-(1,2-dicarboxyethyl)-AMP + GDP + phosphate + 2 H(+)</text>
        <dbReference type="Rhea" id="RHEA:15753"/>
        <dbReference type="ChEBI" id="CHEBI:15378"/>
        <dbReference type="ChEBI" id="CHEBI:29991"/>
        <dbReference type="ChEBI" id="CHEBI:37565"/>
        <dbReference type="ChEBI" id="CHEBI:43474"/>
        <dbReference type="ChEBI" id="CHEBI:57567"/>
        <dbReference type="ChEBI" id="CHEBI:58053"/>
        <dbReference type="ChEBI" id="CHEBI:58189"/>
        <dbReference type="EC" id="6.3.4.4"/>
    </reaction>
</comment>
<comment type="cofactor">
    <cofactor evidence="2">
        <name>Mg(2+)</name>
        <dbReference type="ChEBI" id="CHEBI:18420"/>
    </cofactor>
    <text evidence="2">Binds 1 Mg(2+) ion per subunit.</text>
</comment>
<comment type="pathway">
    <text evidence="2">Purine metabolism; AMP biosynthesis via de novo pathway; AMP from IMP: step 1/2.</text>
</comment>
<comment type="subunit">
    <text evidence="2">Homodimer.</text>
</comment>
<comment type="subcellular location">
    <subcellularLocation>
        <location evidence="2">Cytoplasm</location>
    </subcellularLocation>
</comment>
<comment type="similarity">
    <text evidence="2">Belongs to the adenylosuccinate synthetase family.</text>
</comment>
<evidence type="ECO:0000250" key="1"/>
<evidence type="ECO:0000255" key="2">
    <source>
        <dbReference type="HAMAP-Rule" id="MF_03125"/>
    </source>
</evidence>
<keyword id="KW-0963">Cytoplasm</keyword>
<keyword id="KW-0342">GTP-binding</keyword>
<keyword id="KW-0436">Ligase</keyword>
<keyword id="KW-0460">Magnesium</keyword>
<keyword id="KW-0479">Metal-binding</keyword>
<keyword id="KW-0547">Nucleotide-binding</keyword>
<keyword id="KW-0658">Purine biosynthesis</keyword>
<keyword id="KW-1185">Reference proteome</keyword>
<accession>B0DQB9</accession>
<organism>
    <name type="scientific">Laccaria bicolor (strain S238N-H82 / ATCC MYA-4686)</name>
    <name type="common">Bicoloured deceiver</name>
    <name type="synonym">Laccaria laccata var. bicolor</name>
    <dbReference type="NCBI Taxonomy" id="486041"/>
    <lineage>
        <taxon>Eukaryota</taxon>
        <taxon>Fungi</taxon>
        <taxon>Dikarya</taxon>
        <taxon>Basidiomycota</taxon>
        <taxon>Agaricomycotina</taxon>
        <taxon>Agaricomycetes</taxon>
        <taxon>Agaricomycetidae</taxon>
        <taxon>Agaricales</taxon>
        <taxon>Agaricineae</taxon>
        <taxon>Hydnangiaceae</taxon>
        <taxon>Laccaria</taxon>
    </lineage>
</organism>
<sequence>MSVTVVLGSQWGDEGKGKLVDILAADIDVCARCAGGNNAGHTIIVPIDGVLKTFAFHLLPSGLVNPRCTGLIGSGLVVHVPSFFAELDALEAQGLDCSNRLFISDRAHLVFDFHQIVDGLKEVELGGKSIGTTKRGIGPAYSGKASRSGLRVHHLFDHETFAEKFRKLVEGRYKRYGHFEYDTEGEIERYKKLAERLRPYVVDSVAYIHKAITSGKKVLVEGANALMLDLDFGTYPYVTSSSTTIGGVCTGLGIPPKMIGRTIGVVKAYTTRVGGGPFPAEQLNDIGVHLQEVGREYGTTTGRRRRCGWLDLVVLRHSSMINGYDSLNLTKLDVLDQLPEIKVATRYLVDGKELEGFPADLELLANVDVEYVTLPGWQSSIENITTYDDLPENCKGYIKFIEDSLNVPIEWIGVGPARKSMVRKELKQ</sequence>
<name>PURA1_LACBS</name>
<feature type="chain" id="PRO_0000399338" description="Adenylosuccinate synthetase 1">
    <location>
        <begin position="1"/>
        <end position="428"/>
    </location>
</feature>
<feature type="active site" description="Proton acceptor" evidence="2">
    <location>
        <position position="13"/>
    </location>
</feature>
<feature type="active site" description="Proton donor" evidence="2">
    <location>
        <position position="41"/>
    </location>
</feature>
<feature type="binding site" evidence="2">
    <location>
        <begin position="12"/>
        <end position="18"/>
    </location>
    <ligand>
        <name>GTP</name>
        <dbReference type="ChEBI" id="CHEBI:37565"/>
    </ligand>
</feature>
<feature type="binding site" description="in other chain" evidence="2">
    <location>
        <begin position="13"/>
        <end position="16"/>
    </location>
    <ligand>
        <name>IMP</name>
        <dbReference type="ChEBI" id="CHEBI:58053"/>
        <note>ligand shared between dimeric partners</note>
    </ligand>
</feature>
<feature type="binding site" evidence="2">
    <location>
        <position position="13"/>
    </location>
    <ligand>
        <name>Mg(2+)</name>
        <dbReference type="ChEBI" id="CHEBI:18420"/>
    </ligand>
</feature>
<feature type="binding site" description="in other chain" evidence="2">
    <location>
        <begin position="38"/>
        <end position="41"/>
    </location>
    <ligand>
        <name>IMP</name>
        <dbReference type="ChEBI" id="CHEBI:58053"/>
        <note>ligand shared between dimeric partners</note>
    </ligand>
</feature>
<feature type="binding site" evidence="2">
    <location>
        <begin position="40"/>
        <end position="42"/>
    </location>
    <ligand>
        <name>GTP</name>
        <dbReference type="ChEBI" id="CHEBI:37565"/>
    </ligand>
</feature>
<feature type="binding site" evidence="2">
    <location>
        <position position="40"/>
    </location>
    <ligand>
        <name>Mg(2+)</name>
        <dbReference type="ChEBI" id="CHEBI:18420"/>
    </ligand>
</feature>
<feature type="binding site" description="in other chain" evidence="2">
    <location>
        <position position="133"/>
    </location>
    <ligand>
        <name>IMP</name>
        <dbReference type="ChEBI" id="CHEBI:58053"/>
        <note>ligand shared between dimeric partners</note>
    </ligand>
</feature>
<feature type="binding site" evidence="2">
    <location>
        <position position="147"/>
    </location>
    <ligand>
        <name>IMP</name>
        <dbReference type="ChEBI" id="CHEBI:58053"/>
        <note>ligand shared between dimeric partners</note>
    </ligand>
</feature>
<feature type="binding site" description="in other chain" evidence="2">
    <location>
        <position position="224"/>
    </location>
    <ligand>
        <name>IMP</name>
        <dbReference type="ChEBI" id="CHEBI:58053"/>
        <note>ligand shared between dimeric partners</note>
    </ligand>
</feature>
<feature type="binding site" description="in other chain" evidence="2">
    <location>
        <position position="239"/>
    </location>
    <ligand>
        <name>IMP</name>
        <dbReference type="ChEBI" id="CHEBI:58053"/>
        <note>ligand shared between dimeric partners</note>
    </ligand>
</feature>
<feature type="binding site" evidence="2">
    <location>
        <begin position="299"/>
        <end position="305"/>
    </location>
    <ligand>
        <name>substrate</name>
    </ligand>
</feature>
<feature type="binding site" description="in other chain" evidence="2">
    <location>
        <position position="303"/>
    </location>
    <ligand>
        <name>IMP</name>
        <dbReference type="ChEBI" id="CHEBI:58053"/>
        <note>ligand shared between dimeric partners</note>
    </ligand>
</feature>
<feature type="binding site" evidence="2">
    <location>
        <position position="305"/>
    </location>
    <ligand>
        <name>GTP</name>
        <dbReference type="ChEBI" id="CHEBI:37565"/>
    </ligand>
</feature>
<feature type="binding site" evidence="2">
    <location>
        <begin position="331"/>
        <end position="333"/>
    </location>
    <ligand>
        <name>GTP</name>
        <dbReference type="ChEBI" id="CHEBI:37565"/>
    </ligand>
</feature>
<feature type="binding site" evidence="2">
    <location>
        <begin position="413"/>
        <end position="415"/>
    </location>
    <ligand>
        <name>GTP</name>
        <dbReference type="ChEBI" id="CHEBI:37565"/>
    </ligand>
</feature>
<protein>
    <recommendedName>
        <fullName evidence="2">Adenylosuccinate synthetase 1</fullName>
        <shortName evidence="2">AMPSase 1</shortName>
        <shortName evidence="2">AdSS 1</shortName>
        <ecNumber evidence="2">6.3.4.4</ecNumber>
    </recommendedName>
    <alternativeName>
        <fullName evidence="2">IMP--aspartate ligase 1</fullName>
    </alternativeName>
</protein>
<proteinExistence type="inferred from homology"/>
<gene>
    <name type="ORF">LACBIDRAFT_295311</name>
</gene>
<reference key="1">
    <citation type="journal article" date="2008" name="Nature">
        <title>The genome of Laccaria bicolor provides insights into mycorrhizal symbiosis.</title>
        <authorList>
            <person name="Martin F."/>
            <person name="Aerts A."/>
            <person name="Ahren D."/>
            <person name="Brun A."/>
            <person name="Danchin E.G.J."/>
            <person name="Duchaussoy F."/>
            <person name="Gibon J."/>
            <person name="Kohler A."/>
            <person name="Lindquist E."/>
            <person name="Pereda V."/>
            <person name="Salamov A."/>
            <person name="Shapiro H.J."/>
            <person name="Wuyts J."/>
            <person name="Blaudez D."/>
            <person name="Buee M."/>
            <person name="Brokstein P."/>
            <person name="Canbaeck B."/>
            <person name="Cohen D."/>
            <person name="Courty P.E."/>
            <person name="Coutinho P.M."/>
            <person name="Delaruelle C."/>
            <person name="Detter J.C."/>
            <person name="Deveau A."/>
            <person name="DiFazio S."/>
            <person name="Duplessis S."/>
            <person name="Fraissinet-Tachet L."/>
            <person name="Lucic E."/>
            <person name="Frey-Klett P."/>
            <person name="Fourrey C."/>
            <person name="Feussner I."/>
            <person name="Gay G."/>
            <person name="Grimwood J."/>
            <person name="Hoegger P.J."/>
            <person name="Jain P."/>
            <person name="Kilaru S."/>
            <person name="Labbe J."/>
            <person name="Lin Y.C."/>
            <person name="Legue V."/>
            <person name="Le Tacon F."/>
            <person name="Marmeisse R."/>
            <person name="Melayah D."/>
            <person name="Montanini B."/>
            <person name="Muratet M."/>
            <person name="Nehls U."/>
            <person name="Niculita-Hirzel H."/>
            <person name="Oudot-Le Secq M.P."/>
            <person name="Peter M."/>
            <person name="Quesneville H."/>
            <person name="Rajashekar B."/>
            <person name="Reich M."/>
            <person name="Rouhier N."/>
            <person name="Schmutz J."/>
            <person name="Yin T."/>
            <person name="Chalot M."/>
            <person name="Henrissat B."/>
            <person name="Kuees U."/>
            <person name="Lucas S."/>
            <person name="Van de Peer Y."/>
            <person name="Podila G.K."/>
            <person name="Polle A."/>
            <person name="Pukkila P.J."/>
            <person name="Richardson P.M."/>
            <person name="Rouze P."/>
            <person name="Sanders I.R."/>
            <person name="Stajich J.E."/>
            <person name="Tunlid A."/>
            <person name="Tuskan G."/>
            <person name="Grigoriev I.V."/>
        </authorList>
    </citation>
    <scope>NUCLEOTIDE SEQUENCE [LARGE SCALE GENOMIC DNA]</scope>
    <source>
        <strain>S238N-H82 / ATCC MYA-4686</strain>
    </source>
</reference>